<keyword id="KW-0963">Cytoplasm</keyword>
<keyword id="KW-0275">Fatty acid biosynthesis</keyword>
<keyword id="KW-0276">Fatty acid metabolism</keyword>
<keyword id="KW-0444">Lipid biosynthesis</keyword>
<keyword id="KW-0443">Lipid metabolism</keyword>
<keyword id="KW-0596">Phosphopantetheine</keyword>
<keyword id="KW-0597">Phosphoprotein</keyword>
<keyword id="KW-1185">Reference proteome</keyword>
<reference key="1">
    <citation type="journal article" date="2010" name="J. Bacteriol.">
        <title>The genome of the amoeba symbiont 'Candidatus Amoebophilus asiaticus' reveals common mechanisms for host cell interaction among amoeba-associated bacteria.</title>
        <authorList>
            <person name="Schmitz-Esser S."/>
            <person name="Tischler P."/>
            <person name="Arnold R."/>
            <person name="Montanaro J."/>
            <person name="Wagner M."/>
            <person name="Rattei T."/>
            <person name="Horn M."/>
        </authorList>
    </citation>
    <scope>NUCLEOTIDE SEQUENCE [LARGE SCALE GENOMIC DNA]</scope>
    <source>
        <strain>5a2</strain>
    </source>
</reference>
<organism>
    <name type="scientific">Amoebophilus asiaticus (strain 5a2)</name>
    <dbReference type="NCBI Taxonomy" id="452471"/>
    <lineage>
        <taxon>Bacteria</taxon>
        <taxon>Pseudomonadati</taxon>
        <taxon>Bacteroidota</taxon>
        <taxon>Cytophagia</taxon>
        <taxon>Cytophagales</taxon>
        <taxon>Amoebophilaceae</taxon>
        <taxon>Candidatus Amoebophilus</taxon>
    </lineage>
</organism>
<sequence>MSEINQKVVDIIVDKLAVAPAEVTLEANLANDLGADSLDIVELILEFERVFDINIPEDQAEHIKTVGQVVEYLEKRLAEK</sequence>
<evidence type="ECO:0000255" key="1">
    <source>
        <dbReference type="HAMAP-Rule" id="MF_01217"/>
    </source>
</evidence>
<evidence type="ECO:0000255" key="2">
    <source>
        <dbReference type="PROSITE-ProRule" id="PRU00258"/>
    </source>
</evidence>
<feature type="chain" id="PRO_1000138996" description="Acyl carrier protein">
    <location>
        <begin position="1"/>
        <end position="80"/>
    </location>
</feature>
<feature type="domain" description="Carrier" evidence="2">
    <location>
        <begin position="2"/>
        <end position="77"/>
    </location>
</feature>
<feature type="modified residue" description="O-(pantetheine 4'-phosphoryl)serine" evidence="2">
    <location>
        <position position="37"/>
    </location>
</feature>
<accession>B3ETI4</accession>
<dbReference type="EMBL" id="CP001102">
    <property type="protein sequence ID" value="ACE06536.1"/>
    <property type="molecule type" value="Genomic_DNA"/>
</dbReference>
<dbReference type="RefSeq" id="WP_012473289.1">
    <property type="nucleotide sequence ID" value="NC_010830.1"/>
</dbReference>
<dbReference type="SMR" id="B3ETI4"/>
<dbReference type="STRING" id="452471.Aasi_1208"/>
<dbReference type="KEGG" id="aas:Aasi_1208"/>
<dbReference type="eggNOG" id="COG0236">
    <property type="taxonomic scope" value="Bacteria"/>
</dbReference>
<dbReference type="HOGENOM" id="CLU_108696_5_3_10"/>
<dbReference type="OrthoDB" id="9804551at2"/>
<dbReference type="UniPathway" id="UPA00094"/>
<dbReference type="Proteomes" id="UP000001227">
    <property type="component" value="Chromosome"/>
</dbReference>
<dbReference type="GO" id="GO:0005829">
    <property type="term" value="C:cytosol"/>
    <property type="evidence" value="ECO:0007669"/>
    <property type="project" value="TreeGrafter"/>
</dbReference>
<dbReference type="GO" id="GO:0016020">
    <property type="term" value="C:membrane"/>
    <property type="evidence" value="ECO:0007669"/>
    <property type="project" value="GOC"/>
</dbReference>
<dbReference type="GO" id="GO:0000035">
    <property type="term" value="F:acyl binding"/>
    <property type="evidence" value="ECO:0007669"/>
    <property type="project" value="TreeGrafter"/>
</dbReference>
<dbReference type="GO" id="GO:0000036">
    <property type="term" value="F:acyl carrier activity"/>
    <property type="evidence" value="ECO:0007669"/>
    <property type="project" value="UniProtKB-UniRule"/>
</dbReference>
<dbReference type="GO" id="GO:0009245">
    <property type="term" value="P:lipid A biosynthetic process"/>
    <property type="evidence" value="ECO:0007669"/>
    <property type="project" value="TreeGrafter"/>
</dbReference>
<dbReference type="Gene3D" id="1.10.1200.10">
    <property type="entry name" value="ACP-like"/>
    <property type="match status" value="1"/>
</dbReference>
<dbReference type="HAMAP" id="MF_01217">
    <property type="entry name" value="Acyl_carrier"/>
    <property type="match status" value="1"/>
</dbReference>
<dbReference type="InterPro" id="IPR003231">
    <property type="entry name" value="ACP"/>
</dbReference>
<dbReference type="InterPro" id="IPR036736">
    <property type="entry name" value="ACP-like_sf"/>
</dbReference>
<dbReference type="InterPro" id="IPR009081">
    <property type="entry name" value="PP-bd_ACP"/>
</dbReference>
<dbReference type="NCBIfam" id="TIGR00517">
    <property type="entry name" value="acyl_carrier"/>
    <property type="match status" value="1"/>
</dbReference>
<dbReference type="NCBIfam" id="NF002148">
    <property type="entry name" value="PRK00982.1-2"/>
    <property type="match status" value="1"/>
</dbReference>
<dbReference type="NCBIfam" id="NF002150">
    <property type="entry name" value="PRK00982.1-4"/>
    <property type="match status" value="1"/>
</dbReference>
<dbReference type="NCBIfam" id="NF002151">
    <property type="entry name" value="PRK00982.1-5"/>
    <property type="match status" value="1"/>
</dbReference>
<dbReference type="PANTHER" id="PTHR20863">
    <property type="entry name" value="ACYL CARRIER PROTEIN"/>
    <property type="match status" value="1"/>
</dbReference>
<dbReference type="PANTHER" id="PTHR20863:SF76">
    <property type="entry name" value="CARRIER DOMAIN-CONTAINING PROTEIN"/>
    <property type="match status" value="1"/>
</dbReference>
<dbReference type="Pfam" id="PF00550">
    <property type="entry name" value="PP-binding"/>
    <property type="match status" value="1"/>
</dbReference>
<dbReference type="SUPFAM" id="SSF47336">
    <property type="entry name" value="ACP-like"/>
    <property type="match status" value="1"/>
</dbReference>
<dbReference type="PROSITE" id="PS50075">
    <property type="entry name" value="CARRIER"/>
    <property type="match status" value="1"/>
</dbReference>
<comment type="function">
    <text evidence="1">Carrier of the growing fatty acid chain in fatty acid biosynthesis.</text>
</comment>
<comment type="pathway">
    <text evidence="1">Lipid metabolism; fatty acid biosynthesis.</text>
</comment>
<comment type="subcellular location">
    <subcellularLocation>
        <location evidence="1">Cytoplasm</location>
    </subcellularLocation>
</comment>
<comment type="PTM">
    <text evidence="1">4'-phosphopantetheine is transferred from CoA to a specific serine of apo-ACP by AcpS. This modification is essential for activity because fatty acids are bound in thioester linkage to the sulfhydryl of the prosthetic group.</text>
</comment>
<comment type="similarity">
    <text evidence="1">Belongs to the acyl carrier protein (ACP) family.</text>
</comment>
<protein>
    <recommendedName>
        <fullName evidence="1">Acyl carrier protein</fullName>
        <shortName evidence="1">ACP</shortName>
    </recommendedName>
</protein>
<gene>
    <name evidence="1" type="primary">acpP</name>
    <name type="ordered locus">Aasi_1208</name>
</gene>
<name>ACP_AMOA5</name>
<proteinExistence type="inferred from homology"/>